<gene>
    <name evidence="1" type="primary">dapH</name>
    <name type="ordered locus">SPP_2152</name>
</gene>
<feature type="chain" id="PRO_1000187454" description="2,3,4,5-tetrahydropyridine-2,6-dicarboxylate N-acetyltransferase">
    <location>
        <begin position="1"/>
        <end position="232"/>
    </location>
</feature>
<sequence length="232" mass="23936">MTATKMNAQEIIQFIANAEKKTSVKVTFEGQLATAVPSSVVKLGNVLFGDWKDVAPLLEGLVENQDYVVEQDARNSAVPLLDKRAINARIEPGAIIRDQVEIGDNAVIMMGSVINIGAEIGAGTMIDMGAILGGRAIVGKNSHVGAGAVLAGVIEPASAEPVRVGDNVLIGANAVVIEGVQIGSGSVVAAGAIVTQDVPENVVVAGVPARIIKEIDAQTQQKTALEDALRTL</sequence>
<proteinExistence type="inferred from homology"/>
<evidence type="ECO:0000255" key="1">
    <source>
        <dbReference type="HAMAP-Rule" id="MF_01691"/>
    </source>
</evidence>
<keyword id="KW-0012">Acyltransferase</keyword>
<keyword id="KW-0028">Amino-acid biosynthesis</keyword>
<keyword id="KW-0220">Diaminopimelate biosynthesis</keyword>
<keyword id="KW-0457">Lysine biosynthesis</keyword>
<keyword id="KW-0677">Repeat</keyword>
<keyword id="KW-0808">Transferase</keyword>
<organism>
    <name type="scientific">Streptococcus pneumoniae (strain P1031)</name>
    <dbReference type="NCBI Taxonomy" id="488223"/>
    <lineage>
        <taxon>Bacteria</taxon>
        <taxon>Bacillati</taxon>
        <taxon>Bacillota</taxon>
        <taxon>Bacilli</taxon>
        <taxon>Lactobacillales</taxon>
        <taxon>Streptococcaceae</taxon>
        <taxon>Streptococcus</taxon>
    </lineage>
</organism>
<name>DAPH_STRZP</name>
<protein>
    <recommendedName>
        <fullName evidence="1">2,3,4,5-tetrahydropyridine-2,6-dicarboxylate N-acetyltransferase</fullName>
        <ecNumber evidence="1">2.3.1.89</ecNumber>
    </recommendedName>
    <alternativeName>
        <fullName evidence="1">Tetrahydrodipicolinate N-acetyltransferase</fullName>
        <shortName evidence="1">THP acetyltransferase</shortName>
        <shortName evidence="1">Tetrahydropicolinate acetylase</shortName>
    </alternativeName>
</protein>
<dbReference type="EC" id="2.3.1.89" evidence="1"/>
<dbReference type="EMBL" id="CP000920">
    <property type="protein sequence ID" value="ACO21020.1"/>
    <property type="molecule type" value="Genomic_DNA"/>
</dbReference>
<dbReference type="SMR" id="C1CN43"/>
<dbReference type="KEGG" id="spp:SPP_2152"/>
<dbReference type="HOGENOM" id="CLU_103751_0_0_9"/>
<dbReference type="UniPathway" id="UPA00034">
    <property type="reaction ID" value="UER00022"/>
</dbReference>
<dbReference type="GO" id="GO:0047200">
    <property type="term" value="F:tetrahydrodipicolinate N-acetyltransferase activity"/>
    <property type="evidence" value="ECO:0007669"/>
    <property type="project" value="UniProtKB-EC"/>
</dbReference>
<dbReference type="GO" id="GO:0019877">
    <property type="term" value="P:diaminopimelate biosynthetic process"/>
    <property type="evidence" value="ECO:0007669"/>
    <property type="project" value="UniProtKB-UniRule"/>
</dbReference>
<dbReference type="GO" id="GO:0009089">
    <property type="term" value="P:lysine biosynthetic process via diaminopimelate"/>
    <property type="evidence" value="ECO:0007669"/>
    <property type="project" value="UniProtKB-UniRule"/>
</dbReference>
<dbReference type="Gene3D" id="2.160.10.10">
    <property type="entry name" value="Hexapeptide repeat proteins"/>
    <property type="match status" value="1"/>
</dbReference>
<dbReference type="Gene3D" id="3.30.70.250">
    <property type="entry name" value="Malonyl-CoA ACP transacylase, ACP-binding"/>
    <property type="match status" value="1"/>
</dbReference>
<dbReference type="HAMAP" id="MF_01691">
    <property type="entry name" value="DapH"/>
    <property type="match status" value="1"/>
</dbReference>
<dbReference type="InterPro" id="IPR019873">
    <property type="entry name" value="DapH"/>
</dbReference>
<dbReference type="InterPro" id="IPR013710">
    <property type="entry name" value="DapH_N"/>
</dbReference>
<dbReference type="InterPro" id="IPR001451">
    <property type="entry name" value="Hexapep"/>
</dbReference>
<dbReference type="InterPro" id="IPR018357">
    <property type="entry name" value="Hexapep_transf_CS"/>
</dbReference>
<dbReference type="InterPro" id="IPR050179">
    <property type="entry name" value="Trans_hexapeptide_repeat"/>
</dbReference>
<dbReference type="InterPro" id="IPR011004">
    <property type="entry name" value="Trimer_LpxA-like_sf"/>
</dbReference>
<dbReference type="NCBIfam" id="TIGR03532">
    <property type="entry name" value="DapD_Ac"/>
    <property type="match status" value="1"/>
</dbReference>
<dbReference type="PANTHER" id="PTHR43300:SF10">
    <property type="entry name" value="2,3,4,5-TETRAHYDROPYRIDINE-2,6-DICARBOXYLATE N-ACETYLTRANSFERASE"/>
    <property type="match status" value="1"/>
</dbReference>
<dbReference type="PANTHER" id="PTHR43300">
    <property type="entry name" value="ACETYLTRANSFERASE"/>
    <property type="match status" value="1"/>
</dbReference>
<dbReference type="Pfam" id="PF08503">
    <property type="entry name" value="DapH_N"/>
    <property type="match status" value="1"/>
</dbReference>
<dbReference type="Pfam" id="PF00132">
    <property type="entry name" value="Hexapep"/>
    <property type="match status" value="1"/>
</dbReference>
<dbReference type="Pfam" id="PF14602">
    <property type="entry name" value="Hexapep_2"/>
    <property type="match status" value="2"/>
</dbReference>
<dbReference type="SUPFAM" id="SSF51161">
    <property type="entry name" value="Trimeric LpxA-like enzymes"/>
    <property type="match status" value="1"/>
</dbReference>
<dbReference type="PROSITE" id="PS00101">
    <property type="entry name" value="HEXAPEP_TRANSFERASES"/>
    <property type="match status" value="2"/>
</dbReference>
<comment type="function">
    <text evidence="1">Catalyzes the transfer of an acetyl group from acetyl-CoA to tetrahydrodipicolinate.</text>
</comment>
<comment type="catalytic activity">
    <reaction evidence="1">
        <text>(S)-2,3,4,5-tetrahydrodipicolinate + acetyl-CoA + H2O = L-2-acetamido-6-oxoheptanedioate + CoA</text>
        <dbReference type="Rhea" id="RHEA:13085"/>
        <dbReference type="ChEBI" id="CHEBI:15377"/>
        <dbReference type="ChEBI" id="CHEBI:16845"/>
        <dbReference type="ChEBI" id="CHEBI:57287"/>
        <dbReference type="ChEBI" id="CHEBI:57288"/>
        <dbReference type="ChEBI" id="CHEBI:58117"/>
        <dbReference type="EC" id="2.3.1.89"/>
    </reaction>
</comment>
<comment type="pathway">
    <text evidence="1">Amino-acid biosynthesis; L-lysine biosynthesis via DAP pathway; LL-2,6-diaminopimelate from (S)-tetrahydrodipicolinate (acetylase route): step 1/3.</text>
</comment>
<comment type="similarity">
    <text evidence="1">Belongs to the transferase hexapeptide repeat family. DapH subfamily.</text>
</comment>
<reference key="1">
    <citation type="journal article" date="2010" name="Genome Biol.">
        <title>Structure and dynamics of the pan-genome of Streptococcus pneumoniae and closely related species.</title>
        <authorList>
            <person name="Donati C."/>
            <person name="Hiller N.L."/>
            <person name="Tettelin H."/>
            <person name="Muzzi A."/>
            <person name="Croucher N.J."/>
            <person name="Angiuoli S.V."/>
            <person name="Oggioni M."/>
            <person name="Dunning Hotopp J.C."/>
            <person name="Hu F.Z."/>
            <person name="Riley D.R."/>
            <person name="Covacci A."/>
            <person name="Mitchell T.J."/>
            <person name="Bentley S.D."/>
            <person name="Kilian M."/>
            <person name="Ehrlich G.D."/>
            <person name="Rappuoli R."/>
            <person name="Moxon E.R."/>
            <person name="Masignani V."/>
        </authorList>
    </citation>
    <scope>NUCLEOTIDE SEQUENCE [LARGE SCALE GENOMIC DNA]</scope>
    <source>
        <strain>P1031</strain>
    </source>
</reference>
<accession>C1CN43</accession>